<dbReference type="EC" id="3.4.24.16" evidence="1"/>
<dbReference type="EMBL" id="D13310">
    <property type="protein sequence ID" value="BAA02570.1"/>
    <property type="molecule type" value="mRNA"/>
</dbReference>
<dbReference type="PIR" id="A45985">
    <property type="entry name" value="A45985"/>
</dbReference>
<dbReference type="RefSeq" id="XP_008260508.1">
    <property type="nucleotide sequence ID" value="XM_008262286.1"/>
</dbReference>
<dbReference type="SMR" id="P42675"/>
<dbReference type="FunCoup" id="P42675">
    <property type="interactions" value="1297"/>
</dbReference>
<dbReference type="STRING" id="9986.ENSOCUP00000008123"/>
<dbReference type="MEROPS" id="M03.002"/>
<dbReference type="PaxDb" id="9986-ENSOCUP00000008123"/>
<dbReference type="Ensembl" id="ENSOCUT00000048278.1">
    <property type="protein sequence ID" value="ENSOCUP00000044032.1"/>
    <property type="gene ID" value="ENSOCUG00000009420.4"/>
</dbReference>
<dbReference type="GeneID" id="100357326"/>
<dbReference type="KEGG" id="ocu:100357326"/>
<dbReference type="CTD" id="57486"/>
<dbReference type="eggNOG" id="KOG2089">
    <property type="taxonomic scope" value="Eukaryota"/>
</dbReference>
<dbReference type="GeneTree" id="ENSGT00950000183171"/>
<dbReference type="InParanoid" id="P42675"/>
<dbReference type="OrthoDB" id="534666at2759"/>
<dbReference type="Proteomes" id="UP000001811">
    <property type="component" value="Chromosome 11"/>
</dbReference>
<dbReference type="Bgee" id="ENSOCUG00000009420">
    <property type="expression patterns" value="Expressed in heart and 14 other cell types or tissues"/>
</dbReference>
<dbReference type="ExpressionAtlas" id="P42675">
    <property type="expression patterns" value="baseline"/>
</dbReference>
<dbReference type="GO" id="GO:0005829">
    <property type="term" value="C:cytosol"/>
    <property type="evidence" value="ECO:0007669"/>
    <property type="project" value="UniProtKB-SubCell"/>
</dbReference>
<dbReference type="GO" id="GO:0005758">
    <property type="term" value="C:mitochondrial intermembrane space"/>
    <property type="evidence" value="ECO:0007669"/>
    <property type="project" value="UniProtKB-SubCell"/>
</dbReference>
<dbReference type="GO" id="GO:0046872">
    <property type="term" value="F:metal ion binding"/>
    <property type="evidence" value="ECO:0007669"/>
    <property type="project" value="UniProtKB-KW"/>
</dbReference>
<dbReference type="GO" id="GO:0004222">
    <property type="term" value="F:metalloendopeptidase activity"/>
    <property type="evidence" value="ECO:0007669"/>
    <property type="project" value="InterPro"/>
</dbReference>
<dbReference type="GO" id="GO:0006518">
    <property type="term" value="P:peptide metabolic process"/>
    <property type="evidence" value="ECO:0007669"/>
    <property type="project" value="TreeGrafter"/>
</dbReference>
<dbReference type="GO" id="GO:0006508">
    <property type="term" value="P:proteolysis"/>
    <property type="evidence" value="ECO:0007669"/>
    <property type="project" value="UniProtKB-KW"/>
</dbReference>
<dbReference type="CDD" id="cd06455">
    <property type="entry name" value="M3A_TOP"/>
    <property type="match status" value="1"/>
</dbReference>
<dbReference type="FunFam" id="1.20.1050.40:FF:000001">
    <property type="entry name" value="Thimet oligopeptidase 1"/>
    <property type="match status" value="1"/>
</dbReference>
<dbReference type="FunFam" id="3.40.390.10:FF:000006">
    <property type="entry name" value="Thimet oligopeptidase 1"/>
    <property type="match status" value="1"/>
</dbReference>
<dbReference type="Gene3D" id="3.40.390.10">
    <property type="entry name" value="Collagenase (Catalytic Domain)"/>
    <property type="match status" value="1"/>
</dbReference>
<dbReference type="Gene3D" id="1.20.1050.40">
    <property type="entry name" value="Endopeptidase. Chain P, domain 1"/>
    <property type="match status" value="1"/>
</dbReference>
<dbReference type="Gene3D" id="1.10.1370.10">
    <property type="entry name" value="Neurolysin, domain 3"/>
    <property type="match status" value="1"/>
</dbReference>
<dbReference type="InterPro" id="IPR024079">
    <property type="entry name" value="MetalloPept_cat_dom_sf"/>
</dbReference>
<dbReference type="InterPro" id="IPR024077">
    <property type="entry name" value="Neurolysin/TOP_dom2"/>
</dbReference>
<dbReference type="InterPro" id="IPR024080">
    <property type="entry name" value="Neurolysin/TOP_N"/>
</dbReference>
<dbReference type="InterPro" id="IPR045090">
    <property type="entry name" value="Pept_M3A_M3B"/>
</dbReference>
<dbReference type="InterPro" id="IPR001567">
    <property type="entry name" value="Pept_M3A_M3B_dom"/>
</dbReference>
<dbReference type="PANTHER" id="PTHR11804:SF44">
    <property type="entry name" value="NEUROLYSIN, MITOCHONDRIAL"/>
    <property type="match status" value="1"/>
</dbReference>
<dbReference type="PANTHER" id="PTHR11804">
    <property type="entry name" value="PROTEASE M3 THIMET OLIGOPEPTIDASE-RELATED"/>
    <property type="match status" value="1"/>
</dbReference>
<dbReference type="Pfam" id="PF01432">
    <property type="entry name" value="Peptidase_M3"/>
    <property type="match status" value="1"/>
</dbReference>
<dbReference type="SUPFAM" id="SSF55486">
    <property type="entry name" value="Metalloproteases ('zincins'), catalytic domain"/>
    <property type="match status" value="1"/>
</dbReference>
<dbReference type="PROSITE" id="PS00142">
    <property type="entry name" value="ZINC_PROTEASE"/>
    <property type="match status" value="1"/>
</dbReference>
<comment type="function">
    <text evidence="1">Hydrolyzes oligopeptides such as neurotensin, bradykinin and dynorphin A. Acts as a regulator of cannabinoid signaling pathway by mediating degradation of hemopressin, an antagonist peptide of the cannabinoid receptor CNR1.</text>
</comment>
<comment type="catalytic activity">
    <reaction evidence="1">
        <text>Preferential cleavage in neurotensin: 10-Pro-|-Tyr-11.</text>
        <dbReference type="EC" id="3.4.24.16"/>
    </reaction>
</comment>
<comment type="cofactor">
    <cofactor evidence="2">
        <name>Zn(2+)</name>
        <dbReference type="ChEBI" id="CHEBI:29105"/>
    </cofactor>
    <text evidence="2">Binds 1 zinc ion per subunit.</text>
</comment>
<comment type="subcellular location">
    <subcellularLocation>
        <location evidence="1">Mitochondrion intermembrane space</location>
    </subcellularLocation>
    <subcellularLocation>
        <location evidence="1">Cytoplasm</location>
        <location evidence="1">Cytosol</location>
    </subcellularLocation>
</comment>
<comment type="similarity">
    <text evidence="5">Belongs to the peptidase M3 family.</text>
</comment>
<sequence length="704" mass="80689">MIARCFSAVRGLHRVGGSRILFKMTLGREVMSPLQAVSSYTAAGRNVLRWDLSPEQIKTRTEELIAQTKQVYDSVGMLDIKDVTYENCLQALADVEVKYIVERTMLDFPQHVSTDREVRAASTEADKRLSRFDIEMSMREDIFQRIVHLQETCDLEKIKPEARRYLEKSVKMGRRNGLHLPEEVQNEIKSMKKRMSELCIDFNKNLNEDDTFLVFSKAELGALPDDFIDSLEKMDDDKYKITLKYPHYFPVMKKCCIPETRRRMEMAFNTRCKEENTVILQQLLPLRAQVAKLLGYSTHADFVLEMNTAKSTSRVTAFLDDLSQKLKPLGEAEREFILSLKKKECEEKGFEYDGKINAWDLHYYMTQTEELKYSIDQEFIKEYFPIEVVTEGLLNIYQELLGLSFEQVADAHVWNPSVTLYTVKDKATGEVLGQFYLDLYPREGKYNHAACFGLQPGCLLPDGSRMLSVAALVVNFSQPVAGRPSLLRHDEVRTYFHEFGHVMHQICAQTDFARFSGTNVETDFVEVPSQMLENWVWDIDSLRRLSKHYKDGNPIADDLLEKLVASRLVNTGLLTLRQIVLSKVDQSLHTNSSLDAASEYARYCTDILGVAATPGTNMPATFGHLAGGYDGQYYGYLWSEVFSMDMFYSCFKKEGIMNPEVGMKYRNLILRPGGSLDGMDMLQNFLQREPNQKAFLMSRGLQAP</sequence>
<reference key="1">
    <citation type="journal article" date="1993" name="J. Biol. Chem.">
        <title>Rabbit liver microsomal endopeptidase with substrate specificity for processing proproteins is structurally related to rat testes metalloendopeptidase 24.15.</title>
        <authorList>
            <person name="Kawabata S."/>
            <person name="Nakagawa K."/>
            <person name="Muta T."/>
            <person name="Iwanaga S."/>
            <person name="Davie E.W."/>
        </authorList>
    </citation>
    <scope>NUCLEOTIDE SEQUENCE [MRNA]</scope>
    <scope>PARTIAL PROTEIN SEQUENCE</scope>
    <source>
        <tissue>Liver</tissue>
    </source>
</reference>
<accession>P42675</accession>
<feature type="transit peptide" description="Mitochondrion" evidence="1">
    <location>
        <begin position="1"/>
        <end position="37"/>
    </location>
</feature>
<feature type="chain" id="PRO_0000028577" description="Neurolysin, mitochondrial">
    <location>
        <begin position="38"/>
        <end position="704"/>
    </location>
</feature>
<feature type="active site" evidence="4">
    <location>
        <position position="498"/>
    </location>
</feature>
<feature type="binding site" evidence="4">
    <location>
        <position position="497"/>
    </location>
    <ligand>
        <name>Zn(2+)</name>
        <dbReference type="ChEBI" id="CHEBI:29105"/>
        <note>catalytic</note>
    </ligand>
</feature>
<feature type="binding site" evidence="4">
    <location>
        <position position="501"/>
    </location>
    <ligand>
        <name>Zn(2+)</name>
        <dbReference type="ChEBI" id="CHEBI:29105"/>
        <note>catalytic</note>
    </ligand>
</feature>
<feature type="binding site" evidence="4">
    <location>
        <position position="504"/>
    </location>
    <ligand>
        <name>Zn(2+)</name>
        <dbReference type="ChEBI" id="CHEBI:29105"/>
        <note>catalytic</note>
    </ligand>
</feature>
<feature type="modified residue" description="N6-acetyllysine" evidence="3">
    <location>
        <position position="664"/>
    </location>
</feature>
<name>NEUL_RABIT</name>
<evidence type="ECO:0000250" key="1">
    <source>
        <dbReference type="UniProtKB" id="P42676"/>
    </source>
</evidence>
<evidence type="ECO:0000250" key="2">
    <source>
        <dbReference type="UniProtKB" id="P52888"/>
    </source>
</evidence>
<evidence type="ECO:0000250" key="3">
    <source>
        <dbReference type="UniProtKB" id="Q9BYT8"/>
    </source>
</evidence>
<evidence type="ECO:0000255" key="4">
    <source>
        <dbReference type="PROSITE-ProRule" id="PRU10095"/>
    </source>
</evidence>
<evidence type="ECO:0000305" key="5"/>
<gene>
    <name type="primary">NLN</name>
</gene>
<organism>
    <name type="scientific">Oryctolagus cuniculus</name>
    <name type="common">Rabbit</name>
    <dbReference type="NCBI Taxonomy" id="9986"/>
    <lineage>
        <taxon>Eukaryota</taxon>
        <taxon>Metazoa</taxon>
        <taxon>Chordata</taxon>
        <taxon>Craniata</taxon>
        <taxon>Vertebrata</taxon>
        <taxon>Euteleostomi</taxon>
        <taxon>Mammalia</taxon>
        <taxon>Eutheria</taxon>
        <taxon>Euarchontoglires</taxon>
        <taxon>Glires</taxon>
        <taxon>Lagomorpha</taxon>
        <taxon>Leporidae</taxon>
        <taxon>Oryctolagus</taxon>
    </lineage>
</organism>
<proteinExistence type="evidence at protein level"/>
<keyword id="KW-0007">Acetylation</keyword>
<keyword id="KW-0963">Cytoplasm</keyword>
<keyword id="KW-0903">Direct protein sequencing</keyword>
<keyword id="KW-0378">Hydrolase</keyword>
<keyword id="KW-0479">Metal-binding</keyword>
<keyword id="KW-0482">Metalloprotease</keyword>
<keyword id="KW-0496">Mitochondrion</keyword>
<keyword id="KW-0645">Protease</keyword>
<keyword id="KW-1185">Reference proteome</keyword>
<keyword id="KW-0809">Transit peptide</keyword>
<keyword id="KW-0862">Zinc</keyword>
<protein>
    <recommendedName>
        <fullName>Neurolysin, mitochondrial</fullName>
        <ecNumber evidence="1">3.4.24.16</ecNumber>
    </recommendedName>
    <alternativeName>
        <fullName>Microsomal endopeptidase</fullName>
        <shortName>MEP</shortName>
    </alternativeName>
    <alternativeName>
        <fullName>Mitochondrial oligopeptidase M</fullName>
    </alternativeName>
    <alternativeName>
        <fullName>Neurotensin endopeptidase</fullName>
    </alternativeName>
</protein>